<name>HIS2_PYRIL</name>
<dbReference type="EC" id="3.6.1.31" evidence="1"/>
<dbReference type="EMBL" id="CP000504">
    <property type="protein sequence ID" value="ABL88381.1"/>
    <property type="molecule type" value="Genomic_DNA"/>
</dbReference>
<dbReference type="RefSeq" id="WP_011762956.1">
    <property type="nucleotide sequence ID" value="NC_008701.1"/>
</dbReference>
<dbReference type="SMR" id="A1RTU9"/>
<dbReference type="STRING" id="384616.Pisl_1214"/>
<dbReference type="GeneID" id="4618277"/>
<dbReference type="KEGG" id="pis:Pisl_1214"/>
<dbReference type="eggNOG" id="arCOG02677">
    <property type="taxonomic scope" value="Archaea"/>
</dbReference>
<dbReference type="HOGENOM" id="CLU_123337_0_0_2"/>
<dbReference type="OrthoDB" id="39686at2157"/>
<dbReference type="UniPathway" id="UPA00031">
    <property type="reaction ID" value="UER00007"/>
</dbReference>
<dbReference type="Proteomes" id="UP000002595">
    <property type="component" value="Chromosome"/>
</dbReference>
<dbReference type="GO" id="GO:0005737">
    <property type="term" value="C:cytoplasm"/>
    <property type="evidence" value="ECO:0007669"/>
    <property type="project" value="UniProtKB-SubCell"/>
</dbReference>
<dbReference type="GO" id="GO:0005524">
    <property type="term" value="F:ATP binding"/>
    <property type="evidence" value="ECO:0007669"/>
    <property type="project" value="UniProtKB-KW"/>
</dbReference>
<dbReference type="GO" id="GO:0004636">
    <property type="term" value="F:phosphoribosyl-ATP diphosphatase activity"/>
    <property type="evidence" value="ECO:0007669"/>
    <property type="project" value="UniProtKB-UniRule"/>
</dbReference>
<dbReference type="GO" id="GO:0000105">
    <property type="term" value="P:L-histidine biosynthetic process"/>
    <property type="evidence" value="ECO:0007669"/>
    <property type="project" value="UniProtKB-UniRule"/>
</dbReference>
<dbReference type="CDD" id="cd11534">
    <property type="entry name" value="NTP-PPase_HisIE_like"/>
    <property type="match status" value="1"/>
</dbReference>
<dbReference type="FunFam" id="1.10.287.1080:FF:000002">
    <property type="entry name" value="Histidine biosynthesis bifunctional protein HisIE"/>
    <property type="match status" value="1"/>
</dbReference>
<dbReference type="Gene3D" id="1.10.287.1080">
    <property type="entry name" value="MazG-like"/>
    <property type="match status" value="1"/>
</dbReference>
<dbReference type="HAMAP" id="MF_01020">
    <property type="entry name" value="HisE"/>
    <property type="match status" value="1"/>
</dbReference>
<dbReference type="InterPro" id="IPR008179">
    <property type="entry name" value="HisE"/>
</dbReference>
<dbReference type="InterPro" id="IPR021130">
    <property type="entry name" value="PRib-ATP_PPHydrolase-like"/>
</dbReference>
<dbReference type="NCBIfam" id="TIGR03188">
    <property type="entry name" value="histidine_hisI"/>
    <property type="match status" value="1"/>
</dbReference>
<dbReference type="PANTHER" id="PTHR42945">
    <property type="entry name" value="HISTIDINE BIOSYNTHESIS BIFUNCTIONAL PROTEIN"/>
    <property type="match status" value="1"/>
</dbReference>
<dbReference type="PANTHER" id="PTHR42945:SF1">
    <property type="entry name" value="HISTIDINE BIOSYNTHESIS BIFUNCTIONAL PROTEIN HIS7"/>
    <property type="match status" value="1"/>
</dbReference>
<dbReference type="Pfam" id="PF01503">
    <property type="entry name" value="PRA-PH"/>
    <property type="match status" value="1"/>
</dbReference>
<dbReference type="SUPFAM" id="SSF101386">
    <property type="entry name" value="all-alpha NTP pyrophosphatases"/>
    <property type="match status" value="1"/>
</dbReference>
<sequence length="94" mass="10631">MSCEILRKLEEVIRRRIEEKNPESYTYRLYSSGIHNVARKVGEEAVEVAVAALAEGKSRIVEEAADLLYHLLVLLNSTGLSLGDVCAELERRMR</sequence>
<reference key="1">
    <citation type="submission" date="2006-12" db="EMBL/GenBank/DDBJ databases">
        <title>Complete sequence of Pyrobaculum islandicum DSM 4184.</title>
        <authorList>
            <person name="Copeland A."/>
            <person name="Lucas S."/>
            <person name="Lapidus A."/>
            <person name="Barry K."/>
            <person name="Detter J.C."/>
            <person name="Glavina del Rio T."/>
            <person name="Dalin E."/>
            <person name="Tice H."/>
            <person name="Pitluck S."/>
            <person name="Meincke L."/>
            <person name="Brettin T."/>
            <person name="Bruce D."/>
            <person name="Han C."/>
            <person name="Tapia R."/>
            <person name="Gilna P."/>
            <person name="Schmutz J."/>
            <person name="Larimer F."/>
            <person name="Land M."/>
            <person name="Hauser L."/>
            <person name="Kyrpides N."/>
            <person name="Mikhailova N."/>
            <person name="Cozen A.E."/>
            <person name="Fitz-Gibbon S.T."/>
            <person name="House C.H."/>
            <person name="Saltikov C."/>
            <person name="Lowe T."/>
            <person name="Richardson P."/>
        </authorList>
    </citation>
    <scope>NUCLEOTIDE SEQUENCE [LARGE SCALE GENOMIC DNA]</scope>
    <source>
        <strain>DSM 4184 / JCM 9189 / GEO3</strain>
    </source>
</reference>
<proteinExistence type="inferred from homology"/>
<protein>
    <recommendedName>
        <fullName evidence="1">Phosphoribosyl-ATP pyrophosphatase</fullName>
        <shortName evidence="1">PRA-PH</shortName>
        <ecNumber evidence="1">3.6.1.31</ecNumber>
    </recommendedName>
</protein>
<feature type="chain" id="PRO_1000063376" description="Phosphoribosyl-ATP pyrophosphatase">
    <location>
        <begin position="1"/>
        <end position="94"/>
    </location>
</feature>
<organism>
    <name type="scientific">Pyrobaculum islandicum (strain DSM 4184 / JCM 9189 / GEO3)</name>
    <dbReference type="NCBI Taxonomy" id="384616"/>
    <lineage>
        <taxon>Archaea</taxon>
        <taxon>Thermoproteota</taxon>
        <taxon>Thermoprotei</taxon>
        <taxon>Thermoproteales</taxon>
        <taxon>Thermoproteaceae</taxon>
        <taxon>Pyrobaculum</taxon>
    </lineage>
</organism>
<keyword id="KW-0028">Amino-acid biosynthesis</keyword>
<keyword id="KW-0067">ATP-binding</keyword>
<keyword id="KW-0963">Cytoplasm</keyword>
<keyword id="KW-0368">Histidine biosynthesis</keyword>
<keyword id="KW-0378">Hydrolase</keyword>
<keyword id="KW-0547">Nucleotide-binding</keyword>
<comment type="catalytic activity">
    <reaction evidence="1">
        <text>1-(5-phospho-beta-D-ribosyl)-ATP + H2O = 1-(5-phospho-beta-D-ribosyl)-5'-AMP + diphosphate + H(+)</text>
        <dbReference type="Rhea" id="RHEA:22828"/>
        <dbReference type="ChEBI" id="CHEBI:15377"/>
        <dbReference type="ChEBI" id="CHEBI:15378"/>
        <dbReference type="ChEBI" id="CHEBI:33019"/>
        <dbReference type="ChEBI" id="CHEBI:59457"/>
        <dbReference type="ChEBI" id="CHEBI:73183"/>
        <dbReference type="EC" id="3.6.1.31"/>
    </reaction>
</comment>
<comment type="pathway">
    <text evidence="1">Amino-acid biosynthesis; L-histidine biosynthesis; L-histidine from 5-phospho-alpha-D-ribose 1-diphosphate: step 2/9.</text>
</comment>
<comment type="subcellular location">
    <subcellularLocation>
        <location evidence="1">Cytoplasm</location>
    </subcellularLocation>
</comment>
<comment type="similarity">
    <text evidence="1">Belongs to the PRA-PH family.</text>
</comment>
<accession>A1RTU9</accession>
<gene>
    <name evidence="1" type="primary">hisE</name>
    <name type="ordered locus">Pisl_1214</name>
</gene>
<evidence type="ECO:0000255" key="1">
    <source>
        <dbReference type="HAMAP-Rule" id="MF_01020"/>
    </source>
</evidence>